<comment type="function">
    <text evidence="5 6">Required for the formation of intervein tissue of the wing. Acts in a dosage-dependent manner to suppress wing vein formation and promote development of intervein cells. Might play a role in the proper formation and maintenance of the trachea.</text>
</comment>
<comment type="subcellular location">
    <subcellularLocation>
        <location evidence="1">Nucleus</location>
    </subcellularLocation>
</comment>
<comment type="tissue specificity">
    <text evidence="3 6">After germ band retraction, high levels of zygotic expression are observed in a distinct subset of peripheral tracheal cells distributed throughout the embryo and low levels in somatic muscle. Expressed in the future intervein tissue of the wing imaginal disk from the third instar larvae until eclosion of the adult fly (at protein level).</text>
</comment>
<comment type="developmental stage">
    <text evidence="5">Expressed both maternally and zygotically.</text>
</comment>
<accession>Q24535</accession>
<accession>Q9W182</accession>
<sequence length="449" mass="47621">MDPTRGDSRYNLNYSMSSIGLSLADPADMYGNPALGAGRPPSGGLLQNMGGVPPMQRPNPAAGAPPAPQCQTLHSPQHASQQQQQQQQQQQQHQQQQQQQQQHPQQQRGLKRSGSDCYEDHHRSSGGLTLQGLDNVASGAVDDSVDNYNPLPNKKSPPANGKKTKGRVKIKMEYIDNKLRRYTTFSKRKTGIMKKAYELSTLTGTQVMLLVASETGHVYTFATRKLQPMITSEAGKQLIQTCLNSPDPPSVGGGDQRMSATGFEETELSYNIADEDSKDDRSPTSSGNESDDSSDVEMPAEAAEVATKLPASKTEVSAPPAASCSAATASSGHKTMPALNYQTDTNSGPSTSTAAGGGGSADSKYVYSAASIANIPQKMLRQLIQSGHLQVHAEEDGNQYVTIPLSSTAANLIKSNKLTASGSGASGSGTPVKNDASADKPLTIKQEFD</sequence>
<dbReference type="EMBL" id="X77532">
    <property type="protein sequence ID" value="CAA54670.1"/>
    <property type="molecule type" value="mRNA"/>
</dbReference>
<dbReference type="EMBL" id="AE013599">
    <property type="protein sequence ID" value="AAF47195.1"/>
    <property type="molecule type" value="Genomic_DNA"/>
</dbReference>
<dbReference type="EMBL" id="AY095071">
    <property type="protein sequence ID" value="AAM11399.1"/>
    <property type="molecule type" value="mRNA"/>
</dbReference>
<dbReference type="PIR" id="S42825">
    <property type="entry name" value="S42825"/>
</dbReference>
<dbReference type="RefSeq" id="NP_001286837.1">
    <property type="nucleotide sequence ID" value="NM_001299908.1"/>
</dbReference>
<dbReference type="RefSeq" id="NP_726438.1">
    <property type="nucleotide sequence ID" value="NM_166667.3"/>
</dbReference>
<dbReference type="SMR" id="Q24535"/>
<dbReference type="BioGRID" id="63464">
    <property type="interactions" value="36"/>
</dbReference>
<dbReference type="FunCoup" id="Q24535">
    <property type="interactions" value="872"/>
</dbReference>
<dbReference type="IntAct" id="Q24535">
    <property type="interactions" value="1"/>
</dbReference>
<dbReference type="STRING" id="7227.FBpp0309973"/>
<dbReference type="iPTMnet" id="Q24535"/>
<dbReference type="PaxDb" id="7227-FBpp0072178"/>
<dbReference type="DNASU" id="37890"/>
<dbReference type="EnsemblMetazoa" id="FBtr0072271">
    <property type="protein sequence ID" value="FBpp0072178"/>
    <property type="gene ID" value="FBgn0004101"/>
</dbReference>
<dbReference type="EnsemblMetazoa" id="FBtr0343314">
    <property type="protein sequence ID" value="FBpp0309973"/>
    <property type="gene ID" value="FBgn0004101"/>
</dbReference>
<dbReference type="GeneID" id="37890"/>
<dbReference type="KEGG" id="dme:Dmel_CG3411"/>
<dbReference type="AGR" id="FB:FBgn0004101"/>
<dbReference type="CTD" id="37890"/>
<dbReference type="FlyBase" id="FBgn0004101">
    <property type="gene designation" value="bs"/>
</dbReference>
<dbReference type="VEuPathDB" id="VectorBase:FBgn0004101"/>
<dbReference type="eggNOG" id="KOG0015">
    <property type="taxonomic scope" value="Eukaryota"/>
</dbReference>
<dbReference type="HOGENOM" id="CLU_045186_0_0_1"/>
<dbReference type="InParanoid" id="Q24535"/>
<dbReference type="OMA" id="ANIPPKM"/>
<dbReference type="OrthoDB" id="2284405at2759"/>
<dbReference type="PhylomeDB" id="Q24535"/>
<dbReference type="Reactome" id="R-DME-5663220">
    <property type="pathway name" value="RHO GTPases Activate Formins"/>
</dbReference>
<dbReference type="SignaLink" id="Q24535"/>
<dbReference type="BioGRID-ORCS" id="37890">
    <property type="hits" value="0 hits in 1 CRISPR screen"/>
</dbReference>
<dbReference type="GenomeRNAi" id="37890"/>
<dbReference type="PRO" id="PR:Q24535"/>
<dbReference type="Proteomes" id="UP000000803">
    <property type="component" value="Chromosome 2R"/>
</dbReference>
<dbReference type="Bgee" id="FBgn0004101">
    <property type="expression patterns" value="Expressed in adult tracheocyte (Drosophila) in testis and 138 other cell types or tissues"/>
</dbReference>
<dbReference type="ExpressionAtlas" id="Q24535">
    <property type="expression patterns" value="baseline and differential"/>
</dbReference>
<dbReference type="GO" id="GO:0005634">
    <property type="term" value="C:nucleus"/>
    <property type="evidence" value="ECO:0000314"/>
    <property type="project" value="FlyBase"/>
</dbReference>
<dbReference type="GO" id="GO:0000981">
    <property type="term" value="F:DNA-binding transcription factor activity, RNA polymerase II-specific"/>
    <property type="evidence" value="ECO:0000314"/>
    <property type="project" value="FlyBase"/>
</dbReference>
<dbReference type="GO" id="GO:0140297">
    <property type="term" value="F:DNA-binding transcription factor binding"/>
    <property type="evidence" value="ECO:0000353"/>
    <property type="project" value="FlyBase"/>
</dbReference>
<dbReference type="GO" id="GO:0046983">
    <property type="term" value="F:protein dimerization activity"/>
    <property type="evidence" value="ECO:0007669"/>
    <property type="project" value="InterPro"/>
</dbReference>
<dbReference type="GO" id="GO:0000978">
    <property type="term" value="F:RNA polymerase II cis-regulatory region sequence-specific DNA binding"/>
    <property type="evidence" value="ECO:0000318"/>
    <property type="project" value="GO_Central"/>
</dbReference>
<dbReference type="GO" id="GO:0007475">
    <property type="term" value="P:apposition of dorsal and ventral imaginal disc-derived wing surfaces"/>
    <property type="evidence" value="ECO:0000315"/>
    <property type="project" value="FlyBase"/>
</dbReference>
<dbReference type="GO" id="GO:0060446">
    <property type="term" value="P:branching involved in open tracheal system development"/>
    <property type="evidence" value="ECO:0000315"/>
    <property type="project" value="FlyBase"/>
</dbReference>
<dbReference type="GO" id="GO:0030154">
    <property type="term" value="P:cell differentiation"/>
    <property type="evidence" value="ECO:0000315"/>
    <property type="project" value="UniProtKB"/>
</dbReference>
<dbReference type="GO" id="GO:0007476">
    <property type="term" value="P:imaginal disc-derived wing morphogenesis"/>
    <property type="evidence" value="ECO:0000315"/>
    <property type="project" value="UniProtKB"/>
</dbReference>
<dbReference type="GO" id="GO:0008586">
    <property type="term" value="P:imaginal disc-derived wing vein morphogenesis"/>
    <property type="evidence" value="ECO:0000315"/>
    <property type="project" value="FlyBase"/>
</dbReference>
<dbReference type="GO" id="GO:0002168">
    <property type="term" value="P:instar larval development"/>
    <property type="evidence" value="ECO:0000315"/>
    <property type="project" value="UniProtKB"/>
</dbReference>
<dbReference type="GO" id="GO:0007424">
    <property type="term" value="P:open tracheal system development"/>
    <property type="evidence" value="ECO:0000270"/>
    <property type="project" value="FlyBase"/>
</dbReference>
<dbReference type="GO" id="GO:0045944">
    <property type="term" value="P:positive regulation of transcription by RNA polymerase II"/>
    <property type="evidence" value="ECO:0000314"/>
    <property type="project" value="FlyBase"/>
</dbReference>
<dbReference type="GO" id="GO:0035209">
    <property type="term" value="P:pupal development"/>
    <property type="evidence" value="ECO:0000315"/>
    <property type="project" value="UniProtKB"/>
</dbReference>
<dbReference type="GO" id="GO:0007614">
    <property type="term" value="P:short-term memory"/>
    <property type="evidence" value="ECO:0000315"/>
    <property type="project" value="FlyBase"/>
</dbReference>
<dbReference type="GO" id="GO:0030431">
    <property type="term" value="P:sleep"/>
    <property type="evidence" value="ECO:0000315"/>
    <property type="project" value="FlyBase"/>
</dbReference>
<dbReference type="GO" id="GO:0007430">
    <property type="term" value="P:terminal branching, open tracheal system"/>
    <property type="evidence" value="ECO:0000315"/>
    <property type="project" value="FlyBase"/>
</dbReference>
<dbReference type="GO" id="GO:0035220">
    <property type="term" value="P:wing disc development"/>
    <property type="evidence" value="ECO:0000315"/>
    <property type="project" value="UniProtKB"/>
</dbReference>
<dbReference type="CDD" id="cd00266">
    <property type="entry name" value="MADS_SRF_like"/>
    <property type="match status" value="1"/>
</dbReference>
<dbReference type="FunFam" id="3.40.1810.10:FF:000002">
    <property type="entry name" value="Serum response factor b"/>
    <property type="match status" value="1"/>
</dbReference>
<dbReference type="Gene3D" id="3.40.1810.10">
    <property type="entry name" value="Transcription factor, MADS-box"/>
    <property type="match status" value="1"/>
</dbReference>
<dbReference type="InterPro" id="IPR050142">
    <property type="entry name" value="MADS-box/MEF2_TF"/>
</dbReference>
<dbReference type="InterPro" id="IPR033897">
    <property type="entry name" value="SRF-like_MADS-box"/>
</dbReference>
<dbReference type="InterPro" id="IPR002100">
    <property type="entry name" value="TF_MADSbox"/>
</dbReference>
<dbReference type="InterPro" id="IPR036879">
    <property type="entry name" value="TF_MADSbox_sf"/>
</dbReference>
<dbReference type="PANTHER" id="PTHR48019">
    <property type="entry name" value="SERUM RESPONSE FACTOR HOMOLOG"/>
    <property type="match status" value="1"/>
</dbReference>
<dbReference type="Pfam" id="PF00319">
    <property type="entry name" value="SRF-TF"/>
    <property type="match status" value="1"/>
</dbReference>
<dbReference type="PRINTS" id="PR00404">
    <property type="entry name" value="MADSDOMAIN"/>
</dbReference>
<dbReference type="SMART" id="SM00432">
    <property type="entry name" value="MADS"/>
    <property type="match status" value="1"/>
</dbReference>
<dbReference type="SUPFAM" id="SSF55455">
    <property type="entry name" value="SRF-like"/>
    <property type="match status" value="1"/>
</dbReference>
<dbReference type="PROSITE" id="PS00350">
    <property type="entry name" value="MADS_BOX_1"/>
    <property type="match status" value="1"/>
</dbReference>
<dbReference type="PROSITE" id="PS50066">
    <property type="entry name" value="MADS_BOX_2"/>
    <property type="match status" value="1"/>
</dbReference>
<feature type="chain" id="PRO_0000199426" description="Serum response factor homolog">
    <location>
        <begin position="1"/>
        <end position="449"/>
    </location>
</feature>
<feature type="domain" description="MADS-box" evidence="1">
    <location>
        <begin position="167"/>
        <end position="225"/>
    </location>
</feature>
<feature type="region of interest" description="Disordered" evidence="2">
    <location>
        <begin position="23"/>
        <end position="166"/>
    </location>
</feature>
<feature type="region of interest" description="Disordered" evidence="2">
    <location>
        <begin position="270"/>
        <end position="360"/>
    </location>
</feature>
<feature type="region of interest" description="Disordered" evidence="2">
    <location>
        <begin position="418"/>
        <end position="449"/>
    </location>
</feature>
<feature type="compositionally biased region" description="Polar residues" evidence="2">
    <location>
        <begin position="69"/>
        <end position="80"/>
    </location>
</feature>
<feature type="compositionally biased region" description="Low complexity" evidence="2">
    <location>
        <begin position="81"/>
        <end position="107"/>
    </location>
</feature>
<feature type="compositionally biased region" description="Low complexity" evidence="2">
    <location>
        <begin position="317"/>
        <end position="331"/>
    </location>
</feature>
<feature type="compositionally biased region" description="Low complexity" evidence="2">
    <location>
        <begin position="345"/>
        <end position="354"/>
    </location>
</feature>
<feature type="modified residue" description="Phosphoserine" evidence="4">
    <location>
        <position position="156"/>
    </location>
</feature>
<feature type="sequence conflict" description="In Ref. 1; CAA54670." evidence="7" ref="1">
    <original>S</original>
    <variation>R</variation>
    <location>
        <position position="17"/>
    </location>
</feature>
<feature type="sequence conflict" description="In Ref. 1; CAA54670." evidence="7" ref="1">
    <original>S</original>
    <variation>SS</variation>
    <location>
        <position position="312"/>
    </location>
</feature>
<organism>
    <name type="scientific">Drosophila melanogaster</name>
    <name type="common">Fruit fly</name>
    <dbReference type="NCBI Taxonomy" id="7227"/>
    <lineage>
        <taxon>Eukaryota</taxon>
        <taxon>Metazoa</taxon>
        <taxon>Ecdysozoa</taxon>
        <taxon>Arthropoda</taxon>
        <taxon>Hexapoda</taxon>
        <taxon>Insecta</taxon>
        <taxon>Pterygota</taxon>
        <taxon>Neoptera</taxon>
        <taxon>Endopterygota</taxon>
        <taxon>Diptera</taxon>
        <taxon>Brachycera</taxon>
        <taxon>Muscomorpha</taxon>
        <taxon>Ephydroidea</taxon>
        <taxon>Drosophilidae</taxon>
        <taxon>Drosophila</taxon>
        <taxon>Sophophora</taxon>
    </lineage>
</organism>
<reference key="1">
    <citation type="journal article" date="1994" name="Development">
        <title>The Drosophila SRF homolog is expressed in a subset of tracheal cells and maps within a genomic region required for tracheal development.</title>
        <authorList>
            <person name="Affolter M."/>
            <person name="Montagne J."/>
            <person name="Walldorf U."/>
            <person name="Groppe J.C."/>
            <person name="Kloter U."/>
            <person name="Larosa M."/>
            <person name="Gehring W.J."/>
        </authorList>
    </citation>
    <scope>NUCLEOTIDE SEQUENCE [MRNA]</scope>
    <scope>FUNCTION</scope>
    <scope>DEVELOPMENTAL STAGE</scope>
    <source>
        <tissue>Embryo</tissue>
    </source>
</reference>
<reference key="2">
    <citation type="journal article" date="2000" name="Science">
        <title>The genome sequence of Drosophila melanogaster.</title>
        <authorList>
            <person name="Adams M.D."/>
            <person name="Celniker S.E."/>
            <person name="Holt R.A."/>
            <person name="Evans C.A."/>
            <person name="Gocayne J.D."/>
            <person name="Amanatides P.G."/>
            <person name="Scherer S.E."/>
            <person name="Li P.W."/>
            <person name="Hoskins R.A."/>
            <person name="Galle R.F."/>
            <person name="George R.A."/>
            <person name="Lewis S.E."/>
            <person name="Richards S."/>
            <person name="Ashburner M."/>
            <person name="Henderson S.N."/>
            <person name="Sutton G.G."/>
            <person name="Wortman J.R."/>
            <person name="Yandell M.D."/>
            <person name="Zhang Q."/>
            <person name="Chen L.X."/>
            <person name="Brandon R.C."/>
            <person name="Rogers Y.-H.C."/>
            <person name="Blazej R.G."/>
            <person name="Champe M."/>
            <person name="Pfeiffer B.D."/>
            <person name="Wan K.H."/>
            <person name="Doyle C."/>
            <person name="Baxter E.G."/>
            <person name="Helt G."/>
            <person name="Nelson C.R."/>
            <person name="Miklos G.L.G."/>
            <person name="Abril J.F."/>
            <person name="Agbayani A."/>
            <person name="An H.-J."/>
            <person name="Andrews-Pfannkoch C."/>
            <person name="Baldwin D."/>
            <person name="Ballew R.M."/>
            <person name="Basu A."/>
            <person name="Baxendale J."/>
            <person name="Bayraktaroglu L."/>
            <person name="Beasley E.M."/>
            <person name="Beeson K.Y."/>
            <person name="Benos P.V."/>
            <person name="Berman B.P."/>
            <person name="Bhandari D."/>
            <person name="Bolshakov S."/>
            <person name="Borkova D."/>
            <person name="Botchan M.R."/>
            <person name="Bouck J."/>
            <person name="Brokstein P."/>
            <person name="Brottier P."/>
            <person name="Burtis K.C."/>
            <person name="Busam D.A."/>
            <person name="Butler H."/>
            <person name="Cadieu E."/>
            <person name="Center A."/>
            <person name="Chandra I."/>
            <person name="Cherry J.M."/>
            <person name="Cawley S."/>
            <person name="Dahlke C."/>
            <person name="Davenport L.B."/>
            <person name="Davies P."/>
            <person name="de Pablos B."/>
            <person name="Delcher A."/>
            <person name="Deng Z."/>
            <person name="Mays A.D."/>
            <person name="Dew I."/>
            <person name="Dietz S.M."/>
            <person name="Dodson K."/>
            <person name="Doup L.E."/>
            <person name="Downes M."/>
            <person name="Dugan-Rocha S."/>
            <person name="Dunkov B.C."/>
            <person name="Dunn P."/>
            <person name="Durbin K.J."/>
            <person name="Evangelista C.C."/>
            <person name="Ferraz C."/>
            <person name="Ferriera S."/>
            <person name="Fleischmann W."/>
            <person name="Fosler C."/>
            <person name="Gabrielian A.E."/>
            <person name="Garg N.S."/>
            <person name="Gelbart W.M."/>
            <person name="Glasser K."/>
            <person name="Glodek A."/>
            <person name="Gong F."/>
            <person name="Gorrell J.H."/>
            <person name="Gu Z."/>
            <person name="Guan P."/>
            <person name="Harris M."/>
            <person name="Harris N.L."/>
            <person name="Harvey D.A."/>
            <person name="Heiman T.J."/>
            <person name="Hernandez J.R."/>
            <person name="Houck J."/>
            <person name="Hostin D."/>
            <person name="Houston K.A."/>
            <person name="Howland T.J."/>
            <person name="Wei M.-H."/>
            <person name="Ibegwam C."/>
            <person name="Jalali M."/>
            <person name="Kalush F."/>
            <person name="Karpen G.H."/>
            <person name="Ke Z."/>
            <person name="Kennison J.A."/>
            <person name="Ketchum K.A."/>
            <person name="Kimmel B.E."/>
            <person name="Kodira C.D."/>
            <person name="Kraft C.L."/>
            <person name="Kravitz S."/>
            <person name="Kulp D."/>
            <person name="Lai Z."/>
            <person name="Lasko P."/>
            <person name="Lei Y."/>
            <person name="Levitsky A.A."/>
            <person name="Li J.H."/>
            <person name="Li Z."/>
            <person name="Liang Y."/>
            <person name="Lin X."/>
            <person name="Liu X."/>
            <person name="Mattei B."/>
            <person name="McIntosh T.C."/>
            <person name="McLeod M.P."/>
            <person name="McPherson D."/>
            <person name="Merkulov G."/>
            <person name="Milshina N.V."/>
            <person name="Mobarry C."/>
            <person name="Morris J."/>
            <person name="Moshrefi A."/>
            <person name="Mount S.M."/>
            <person name="Moy M."/>
            <person name="Murphy B."/>
            <person name="Murphy L."/>
            <person name="Muzny D.M."/>
            <person name="Nelson D.L."/>
            <person name="Nelson D.R."/>
            <person name="Nelson K.A."/>
            <person name="Nixon K."/>
            <person name="Nusskern D.R."/>
            <person name="Pacleb J.M."/>
            <person name="Palazzolo M."/>
            <person name="Pittman G.S."/>
            <person name="Pan S."/>
            <person name="Pollard J."/>
            <person name="Puri V."/>
            <person name="Reese M.G."/>
            <person name="Reinert K."/>
            <person name="Remington K."/>
            <person name="Saunders R.D.C."/>
            <person name="Scheeler F."/>
            <person name="Shen H."/>
            <person name="Shue B.C."/>
            <person name="Siden-Kiamos I."/>
            <person name="Simpson M."/>
            <person name="Skupski M.P."/>
            <person name="Smith T.J."/>
            <person name="Spier E."/>
            <person name="Spradling A.C."/>
            <person name="Stapleton M."/>
            <person name="Strong R."/>
            <person name="Sun E."/>
            <person name="Svirskas R."/>
            <person name="Tector C."/>
            <person name="Turner R."/>
            <person name="Venter E."/>
            <person name="Wang A.H."/>
            <person name="Wang X."/>
            <person name="Wang Z.-Y."/>
            <person name="Wassarman D.A."/>
            <person name="Weinstock G.M."/>
            <person name="Weissenbach J."/>
            <person name="Williams S.M."/>
            <person name="Woodage T."/>
            <person name="Worley K.C."/>
            <person name="Wu D."/>
            <person name="Yang S."/>
            <person name="Yao Q.A."/>
            <person name="Ye J."/>
            <person name="Yeh R.-F."/>
            <person name="Zaveri J.S."/>
            <person name="Zhan M."/>
            <person name="Zhang G."/>
            <person name="Zhao Q."/>
            <person name="Zheng L."/>
            <person name="Zheng X.H."/>
            <person name="Zhong F.N."/>
            <person name="Zhong W."/>
            <person name="Zhou X."/>
            <person name="Zhu S.C."/>
            <person name="Zhu X."/>
            <person name="Smith H.O."/>
            <person name="Gibbs R.A."/>
            <person name="Myers E.W."/>
            <person name="Rubin G.M."/>
            <person name="Venter J.C."/>
        </authorList>
    </citation>
    <scope>NUCLEOTIDE SEQUENCE [LARGE SCALE GENOMIC DNA]</scope>
    <source>
        <strain>Berkeley</strain>
    </source>
</reference>
<reference key="3">
    <citation type="journal article" date="2002" name="Genome Biol.">
        <title>Annotation of the Drosophila melanogaster euchromatic genome: a systematic review.</title>
        <authorList>
            <person name="Misra S."/>
            <person name="Crosby M.A."/>
            <person name="Mungall C.J."/>
            <person name="Matthews B.B."/>
            <person name="Campbell K.S."/>
            <person name="Hradecky P."/>
            <person name="Huang Y."/>
            <person name="Kaminker J.S."/>
            <person name="Millburn G.H."/>
            <person name="Prochnik S.E."/>
            <person name="Smith C.D."/>
            <person name="Tupy J.L."/>
            <person name="Whitfield E.J."/>
            <person name="Bayraktaroglu L."/>
            <person name="Berman B.P."/>
            <person name="Bettencourt B.R."/>
            <person name="Celniker S.E."/>
            <person name="de Grey A.D.N.J."/>
            <person name="Drysdale R.A."/>
            <person name="Harris N.L."/>
            <person name="Richter J."/>
            <person name="Russo S."/>
            <person name="Schroeder A.J."/>
            <person name="Shu S.Q."/>
            <person name="Stapleton M."/>
            <person name="Yamada C."/>
            <person name="Ashburner M."/>
            <person name="Gelbart W.M."/>
            <person name="Rubin G.M."/>
            <person name="Lewis S.E."/>
        </authorList>
    </citation>
    <scope>GENOME REANNOTATION</scope>
    <source>
        <strain>Berkeley</strain>
    </source>
</reference>
<reference key="4">
    <citation type="journal article" date="2002" name="Genome Biol.">
        <title>A Drosophila full-length cDNA resource.</title>
        <authorList>
            <person name="Stapleton M."/>
            <person name="Carlson J.W."/>
            <person name="Brokstein P."/>
            <person name="Yu C."/>
            <person name="Champe M."/>
            <person name="George R.A."/>
            <person name="Guarin H."/>
            <person name="Kronmiller B."/>
            <person name="Pacleb J.M."/>
            <person name="Park S."/>
            <person name="Wan K.H."/>
            <person name="Rubin G.M."/>
            <person name="Celniker S.E."/>
        </authorList>
    </citation>
    <scope>NUCLEOTIDE SEQUENCE [LARGE SCALE MRNA]</scope>
    <source>
        <strain>Berkeley</strain>
        <tissue>Embryo</tissue>
    </source>
</reference>
<reference key="5">
    <citation type="journal article" date="1996" name="Development">
        <title>The Drosophila serum response factor gene is required for the formation of intervein tissue of the wing and is allelic to blistered.</title>
        <authorList>
            <person name="Montagne J."/>
            <person name="Groppe J."/>
            <person name="Guillemin K."/>
            <person name="Krasnow M.A."/>
            <person name="Gehring W.J."/>
            <person name="Affolter M."/>
        </authorList>
    </citation>
    <scope>FUNCTION</scope>
    <scope>TISSUE SPECIFICITY</scope>
</reference>
<reference key="6">
    <citation type="journal article" date="2000" name="Mech. Dev.">
        <title>Expression of the blistered/DSRF gene is controlled by different morphogens during Drosophila trachea and wing development.</title>
        <authorList>
            <person name="Nussbaumer U."/>
            <person name="Halder G."/>
            <person name="Groppe J."/>
            <person name="Affolter M."/>
            <person name="Montagne J."/>
        </authorList>
    </citation>
    <scope>TISSUE SPECIFICITY</scope>
</reference>
<reference key="7">
    <citation type="journal article" date="2008" name="J. Proteome Res.">
        <title>Phosphoproteome analysis of Drosophila melanogaster embryos.</title>
        <authorList>
            <person name="Zhai B."/>
            <person name="Villen J."/>
            <person name="Beausoleil S.A."/>
            <person name="Mintseris J."/>
            <person name="Gygi S.P."/>
        </authorList>
    </citation>
    <scope>PHOSPHORYLATION [LARGE SCALE ANALYSIS] AT SER-156</scope>
    <scope>IDENTIFICATION BY MASS SPECTROMETRY</scope>
    <source>
        <tissue>Embryo</tissue>
    </source>
</reference>
<protein>
    <recommendedName>
        <fullName>Serum response factor homolog</fullName>
        <shortName>dSRF</shortName>
    </recommendedName>
    <alternativeName>
        <fullName>Protein blistered</fullName>
    </alternativeName>
</protein>
<gene>
    <name type="primary">bs</name>
    <name type="synonym">Serf</name>
    <name type="ORF">CG3411</name>
</gene>
<proteinExistence type="evidence at protein level"/>
<name>SRF_DROME</name>
<evidence type="ECO:0000255" key="1">
    <source>
        <dbReference type="PROSITE-ProRule" id="PRU00251"/>
    </source>
</evidence>
<evidence type="ECO:0000256" key="2">
    <source>
        <dbReference type="SAM" id="MobiDB-lite"/>
    </source>
</evidence>
<evidence type="ECO:0000269" key="3">
    <source>
    </source>
</evidence>
<evidence type="ECO:0000269" key="4">
    <source>
    </source>
</evidence>
<evidence type="ECO:0000269" key="5">
    <source>
    </source>
</evidence>
<evidence type="ECO:0000269" key="6">
    <source>
    </source>
</evidence>
<evidence type="ECO:0000305" key="7"/>
<keyword id="KW-0010">Activator</keyword>
<keyword id="KW-0217">Developmental protein</keyword>
<keyword id="KW-0238">DNA-binding</keyword>
<keyword id="KW-0539">Nucleus</keyword>
<keyword id="KW-0597">Phosphoprotein</keyword>
<keyword id="KW-1185">Reference proteome</keyword>
<keyword id="KW-0804">Transcription</keyword>
<keyword id="KW-0805">Transcription regulation</keyword>